<sequence>MSDTLNRLAEVLEERKHAAPDSSYVASLYHKGLNKILEKLGEESVETIIAAKDAEHSKDYSDVIYETADLWFHSLVMLSALGQHPQAVLDELERRFGLSGHDEKAARQPSA</sequence>
<protein>
    <recommendedName>
        <fullName evidence="1">Phosphoribosyl-ATP pyrophosphatase</fullName>
        <shortName evidence="1">PRA-PH</shortName>
        <ecNumber evidence="1">3.6.1.31</ecNumber>
    </recommendedName>
</protein>
<accession>B0KM40</accession>
<comment type="catalytic activity">
    <reaction evidence="1">
        <text>1-(5-phospho-beta-D-ribosyl)-ATP + H2O = 1-(5-phospho-beta-D-ribosyl)-5'-AMP + diphosphate + H(+)</text>
        <dbReference type="Rhea" id="RHEA:22828"/>
        <dbReference type="ChEBI" id="CHEBI:15377"/>
        <dbReference type="ChEBI" id="CHEBI:15378"/>
        <dbReference type="ChEBI" id="CHEBI:33019"/>
        <dbReference type="ChEBI" id="CHEBI:59457"/>
        <dbReference type="ChEBI" id="CHEBI:73183"/>
        <dbReference type="EC" id="3.6.1.31"/>
    </reaction>
</comment>
<comment type="pathway">
    <text evidence="1">Amino-acid biosynthesis; L-histidine biosynthesis; L-histidine from 5-phospho-alpha-D-ribose 1-diphosphate: step 2/9.</text>
</comment>
<comment type="subcellular location">
    <subcellularLocation>
        <location evidence="1">Cytoplasm</location>
    </subcellularLocation>
</comment>
<comment type="similarity">
    <text evidence="1">Belongs to the PRA-PH family.</text>
</comment>
<feature type="chain" id="PRO_1000084171" description="Phosphoribosyl-ATP pyrophosphatase">
    <location>
        <begin position="1"/>
        <end position="111"/>
    </location>
</feature>
<dbReference type="EC" id="3.6.1.31" evidence="1"/>
<dbReference type="EMBL" id="CP000926">
    <property type="protein sequence ID" value="ABZ00950.1"/>
    <property type="molecule type" value="Genomic_DNA"/>
</dbReference>
<dbReference type="RefSeq" id="WP_012274572.1">
    <property type="nucleotide sequence ID" value="NC_010322.1"/>
</dbReference>
<dbReference type="SMR" id="B0KM40"/>
<dbReference type="KEGG" id="ppg:PputGB1_5065"/>
<dbReference type="eggNOG" id="COG0140">
    <property type="taxonomic scope" value="Bacteria"/>
</dbReference>
<dbReference type="HOGENOM" id="CLU_123337_1_2_6"/>
<dbReference type="UniPathway" id="UPA00031">
    <property type="reaction ID" value="UER00007"/>
</dbReference>
<dbReference type="Proteomes" id="UP000002157">
    <property type="component" value="Chromosome"/>
</dbReference>
<dbReference type="GO" id="GO:0005737">
    <property type="term" value="C:cytoplasm"/>
    <property type="evidence" value="ECO:0007669"/>
    <property type="project" value="UniProtKB-SubCell"/>
</dbReference>
<dbReference type="GO" id="GO:0005524">
    <property type="term" value="F:ATP binding"/>
    <property type="evidence" value="ECO:0007669"/>
    <property type="project" value="UniProtKB-KW"/>
</dbReference>
<dbReference type="GO" id="GO:0004636">
    <property type="term" value="F:phosphoribosyl-ATP diphosphatase activity"/>
    <property type="evidence" value="ECO:0007669"/>
    <property type="project" value="UniProtKB-UniRule"/>
</dbReference>
<dbReference type="GO" id="GO:0000105">
    <property type="term" value="P:L-histidine biosynthetic process"/>
    <property type="evidence" value="ECO:0007669"/>
    <property type="project" value="UniProtKB-UniRule"/>
</dbReference>
<dbReference type="CDD" id="cd11534">
    <property type="entry name" value="NTP-PPase_HisIE_like"/>
    <property type="match status" value="1"/>
</dbReference>
<dbReference type="Gene3D" id="1.10.287.1080">
    <property type="entry name" value="MazG-like"/>
    <property type="match status" value="1"/>
</dbReference>
<dbReference type="HAMAP" id="MF_01020">
    <property type="entry name" value="HisE"/>
    <property type="match status" value="1"/>
</dbReference>
<dbReference type="InterPro" id="IPR008179">
    <property type="entry name" value="HisE"/>
</dbReference>
<dbReference type="InterPro" id="IPR021130">
    <property type="entry name" value="PRib-ATP_PPHydrolase-like"/>
</dbReference>
<dbReference type="NCBIfam" id="TIGR03188">
    <property type="entry name" value="histidine_hisI"/>
    <property type="match status" value="1"/>
</dbReference>
<dbReference type="NCBIfam" id="NF001611">
    <property type="entry name" value="PRK00400.1-3"/>
    <property type="match status" value="1"/>
</dbReference>
<dbReference type="PANTHER" id="PTHR42945">
    <property type="entry name" value="HISTIDINE BIOSYNTHESIS BIFUNCTIONAL PROTEIN"/>
    <property type="match status" value="1"/>
</dbReference>
<dbReference type="PANTHER" id="PTHR42945:SF9">
    <property type="entry name" value="HISTIDINE BIOSYNTHESIS BIFUNCTIONAL PROTEIN HISIE"/>
    <property type="match status" value="1"/>
</dbReference>
<dbReference type="Pfam" id="PF01503">
    <property type="entry name" value="PRA-PH"/>
    <property type="match status" value="1"/>
</dbReference>
<dbReference type="SUPFAM" id="SSF101386">
    <property type="entry name" value="all-alpha NTP pyrophosphatases"/>
    <property type="match status" value="1"/>
</dbReference>
<keyword id="KW-0028">Amino-acid biosynthesis</keyword>
<keyword id="KW-0067">ATP-binding</keyword>
<keyword id="KW-0963">Cytoplasm</keyword>
<keyword id="KW-0368">Histidine biosynthesis</keyword>
<keyword id="KW-0378">Hydrolase</keyword>
<keyword id="KW-0547">Nucleotide-binding</keyword>
<organism>
    <name type="scientific">Pseudomonas putida (strain GB-1)</name>
    <dbReference type="NCBI Taxonomy" id="76869"/>
    <lineage>
        <taxon>Bacteria</taxon>
        <taxon>Pseudomonadati</taxon>
        <taxon>Pseudomonadota</taxon>
        <taxon>Gammaproteobacteria</taxon>
        <taxon>Pseudomonadales</taxon>
        <taxon>Pseudomonadaceae</taxon>
        <taxon>Pseudomonas</taxon>
    </lineage>
</organism>
<name>HIS2_PSEPG</name>
<proteinExistence type="inferred from homology"/>
<evidence type="ECO:0000255" key="1">
    <source>
        <dbReference type="HAMAP-Rule" id="MF_01020"/>
    </source>
</evidence>
<gene>
    <name evidence="1" type="primary">hisE</name>
    <name type="ordered locus">PputGB1_5065</name>
</gene>
<reference key="1">
    <citation type="submission" date="2008-01" db="EMBL/GenBank/DDBJ databases">
        <title>Complete sequence of Pseudomonas putida GB-1.</title>
        <authorList>
            <consortium name="US DOE Joint Genome Institute"/>
            <person name="Copeland A."/>
            <person name="Lucas S."/>
            <person name="Lapidus A."/>
            <person name="Barry K."/>
            <person name="Glavina del Rio T."/>
            <person name="Dalin E."/>
            <person name="Tice H."/>
            <person name="Pitluck S."/>
            <person name="Bruce D."/>
            <person name="Goodwin L."/>
            <person name="Chertkov O."/>
            <person name="Brettin T."/>
            <person name="Detter J.C."/>
            <person name="Han C."/>
            <person name="Kuske C.R."/>
            <person name="Schmutz J."/>
            <person name="Larimer F."/>
            <person name="Land M."/>
            <person name="Hauser L."/>
            <person name="Kyrpides N."/>
            <person name="Kim E."/>
            <person name="McCarthy J.K."/>
            <person name="Richardson P."/>
        </authorList>
    </citation>
    <scope>NUCLEOTIDE SEQUENCE [LARGE SCALE GENOMIC DNA]</scope>
    <source>
        <strain>GB-1</strain>
    </source>
</reference>